<comment type="subunit">
    <text evidence="1">Part of the 50S ribosomal subunit.</text>
</comment>
<comment type="similarity">
    <text evidence="1">Belongs to the bacterial ribosomal protein bL31 family. Type B subfamily.</text>
</comment>
<dbReference type="EMBL" id="AJ938182">
    <property type="protein sequence ID" value="CAI81693.1"/>
    <property type="molecule type" value="Genomic_DNA"/>
</dbReference>
<dbReference type="RefSeq" id="WP_000808968.1">
    <property type="nucleotide sequence ID" value="NC_007622.1"/>
</dbReference>
<dbReference type="PDB" id="6FXC">
    <property type="method" value="EM"/>
    <property type="resolution" value="6.76 A"/>
    <property type="chains" value="AY/BY=1-59"/>
</dbReference>
<dbReference type="PDBsum" id="6FXC"/>
<dbReference type="EMDB" id="EMD-3637"/>
<dbReference type="SMR" id="Q2YUN3"/>
<dbReference type="KEGG" id="sab:SAB2004c"/>
<dbReference type="HOGENOM" id="CLU_114306_2_2_9"/>
<dbReference type="GO" id="GO:1990904">
    <property type="term" value="C:ribonucleoprotein complex"/>
    <property type="evidence" value="ECO:0007669"/>
    <property type="project" value="UniProtKB-KW"/>
</dbReference>
<dbReference type="GO" id="GO:0005840">
    <property type="term" value="C:ribosome"/>
    <property type="evidence" value="ECO:0007669"/>
    <property type="project" value="UniProtKB-KW"/>
</dbReference>
<dbReference type="GO" id="GO:0003735">
    <property type="term" value="F:structural constituent of ribosome"/>
    <property type="evidence" value="ECO:0007669"/>
    <property type="project" value="InterPro"/>
</dbReference>
<dbReference type="GO" id="GO:0006412">
    <property type="term" value="P:translation"/>
    <property type="evidence" value="ECO:0007669"/>
    <property type="project" value="UniProtKB-UniRule"/>
</dbReference>
<dbReference type="Gene3D" id="4.10.830.30">
    <property type="entry name" value="Ribosomal protein L31"/>
    <property type="match status" value="1"/>
</dbReference>
<dbReference type="HAMAP" id="MF_00502">
    <property type="entry name" value="Ribosomal_bL31_2"/>
    <property type="match status" value="1"/>
</dbReference>
<dbReference type="InterPro" id="IPR034704">
    <property type="entry name" value="Ribosomal_bL28/bL31-like_sf"/>
</dbReference>
<dbReference type="InterPro" id="IPR002150">
    <property type="entry name" value="Ribosomal_bL31"/>
</dbReference>
<dbReference type="InterPro" id="IPR027493">
    <property type="entry name" value="Ribosomal_bL31_B"/>
</dbReference>
<dbReference type="InterPro" id="IPR042105">
    <property type="entry name" value="Ribosomal_bL31_sf"/>
</dbReference>
<dbReference type="NCBIfam" id="TIGR00105">
    <property type="entry name" value="L31"/>
    <property type="match status" value="1"/>
</dbReference>
<dbReference type="NCBIfam" id="NF002462">
    <property type="entry name" value="PRK01678.1"/>
    <property type="match status" value="1"/>
</dbReference>
<dbReference type="PANTHER" id="PTHR33280">
    <property type="entry name" value="50S RIBOSOMAL PROTEIN L31, CHLOROPLASTIC"/>
    <property type="match status" value="1"/>
</dbReference>
<dbReference type="PANTHER" id="PTHR33280:SF1">
    <property type="entry name" value="LARGE RIBOSOMAL SUBUNIT PROTEIN BL31C"/>
    <property type="match status" value="1"/>
</dbReference>
<dbReference type="Pfam" id="PF01197">
    <property type="entry name" value="Ribosomal_L31"/>
    <property type="match status" value="1"/>
</dbReference>
<dbReference type="PRINTS" id="PR01249">
    <property type="entry name" value="RIBOSOMALL31"/>
</dbReference>
<dbReference type="SUPFAM" id="SSF143800">
    <property type="entry name" value="L28p-like"/>
    <property type="match status" value="1"/>
</dbReference>
<dbReference type="PROSITE" id="PS01143">
    <property type="entry name" value="RIBOSOMAL_L31"/>
    <property type="match status" value="1"/>
</dbReference>
<name>RL31B_STAAB</name>
<gene>
    <name evidence="1" type="primary">rpmE2</name>
    <name type="ordered locus">SAB2004c</name>
</gene>
<reference key="1">
    <citation type="journal article" date="2007" name="PLoS ONE">
        <title>Molecular correlates of host specialization in Staphylococcus aureus.</title>
        <authorList>
            <person name="Herron-Olson L."/>
            <person name="Fitzgerald J.R."/>
            <person name="Musser J.M."/>
            <person name="Kapur V."/>
        </authorList>
    </citation>
    <scope>NUCLEOTIDE SEQUENCE [LARGE SCALE GENOMIC DNA]</scope>
    <source>
        <strain>bovine RF122 / ET3-1</strain>
    </source>
</reference>
<evidence type="ECO:0000255" key="1">
    <source>
        <dbReference type="HAMAP-Rule" id="MF_00502"/>
    </source>
</evidence>
<evidence type="ECO:0000305" key="2"/>
<accession>Q2YUN3</accession>
<proteinExistence type="evidence at protein level"/>
<keyword id="KW-0002">3D-structure</keyword>
<keyword id="KW-0687">Ribonucleoprotein</keyword>
<keyword id="KW-0689">Ribosomal protein</keyword>
<feature type="chain" id="PRO_0000259120" description="Large ribosomal subunit protein bL31B">
    <location>
        <begin position="1"/>
        <end position="84"/>
    </location>
</feature>
<organism>
    <name type="scientific">Staphylococcus aureus (strain bovine RF122 / ET3-1)</name>
    <dbReference type="NCBI Taxonomy" id="273036"/>
    <lineage>
        <taxon>Bacteria</taxon>
        <taxon>Bacillati</taxon>
        <taxon>Bacillota</taxon>
        <taxon>Bacilli</taxon>
        <taxon>Bacillales</taxon>
        <taxon>Staphylococcaceae</taxon>
        <taxon>Staphylococcus</taxon>
    </lineage>
</organism>
<sequence length="84" mass="9723">MKQGIHPEYHQVIFLDTTTNFKFLSGSTKTSSEMMEWEDGKEYPVIRLDISSDSHPFYTGRQKFAAADGRVERFNKKFGLKSNN</sequence>
<protein>
    <recommendedName>
        <fullName evidence="1">Large ribosomal subunit protein bL31B</fullName>
    </recommendedName>
    <alternativeName>
        <fullName evidence="2">50S ribosomal protein L31 type B</fullName>
    </alternativeName>
</protein>